<proteinExistence type="inferred from homology"/>
<feature type="chain" id="PRO_0000055154" description="Pre-mRNA-splicing factor ATP-dependent RNA helicase-like protein cdc28">
    <location>
        <begin position="1"/>
        <end position="1055"/>
    </location>
</feature>
<feature type="domain" description="Helicase ATP-binding" evidence="2">
    <location>
        <begin position="428"/>
        <end position="592"/>
    </location>
</feature>
<feature type="domain" description="Helicase C-terminal" evidence="3">
    <location>
        <begin position="617"/>
        <end position="790"/>
    </location>
</feature>
<feature type="region of interest" description="Disordered" evidence="4">
    <location>
        <begin position="67"/>
        <end position="184"/>
    </location>
</feature>
<feature type="short sequence motif" description="DEAH box">
    <location>
        <begin position="539"/>
        <end position="542"/>
    </location>
</feature>
<feature type="compositionally biased region" description="Basic and acidic residues" evidence="4">
    <location>
        <begin position="67"/>
        <end position="78"/>
    </location>
</feature>
<feature type="compositionally biased region" description="Basic residues" evidence="4">
    <location>
        <begin position="112"/>
        <end position="121"/>
    </location>
</feature>
<feature type="compositionally biased region" description="Basic and acidic residues" evidence="4">
    <location>
        <begin position="122"/>
        <end position="132"/>
    </location>
</feature>
<feature type="compositionally biased region" description="Acidic residues" evidence="4">
    <location>
        <begin position="133"/>
        <end position="145"/>
    </location>
</feature>
<feature type="compositionally biased region" description="Basic and acidic residues" evidence="4">
    <location>
        <begin position="163"/>
        <end position="184"/>
    </location>
</feature>
<feature type="binding site" evidence="2">
    <location>
        <begin position="441"/>
        <end position="448"/>
    </location>
    <ligand>
        <name>ATP</name>
        <dbReference type="ChEBI" id="CHEBI:30616"/>
    </ligand>
</feature>
<feature type="sequence conflict" description="In Ref. 1; AAC49377." evidence="7" ref="1">
    <original>R</original>
    <variation>W</variation>
    <location>
        <position position="760"/>
    </location>
</feature>
<feature type="sequence conflict" description="In Ref. 1; AAC49377." evidence="7" ref="1">
    <original>S</original>
    <variation>P</variation>
    <location>
        <position position="969"/>
    </location>
</feature>
<sequence length="1055" mass="121217">MSLEQYVSDKAISLLGMSEPSVVEYLIAEAKGSSSSNNLYQKLVSFGMDGDDPAVKEFAHTLYARIPREGSRPKENYNARKKKEQGILQMERLNSSYDLLIEPQSHETPGKPLKKKSRSKTPKREIARRQRDEDEWESDEYEEVVDGSASHPIEEDSVSTDFQNHDYEKSSDPETERLNDLREREEFEERLRRKDLEAATNEFVEDYSSKFSSEELALRKLADDPESWRKLASELRKKSRQQYLKPRAQQQLEILRREIRDEEQLFAGEKLTQAEIRELEKKKELLRIAEERQRLEKQATEYQMPEDYFTEQGKLDRKRKEEVLYQRYKDSNEGEQNEVTMGAAEQQRWEAQQINKALLFDQNEWLPPGEKQFDFVFDESQQIDFLLDTKLSAENPVDTDKMTDVKVEKSLESSRKSLPVYQYKDDLLKAINEYQVLLIVAETGSGKTTQLPQFLHEAGYTKGNKKICCTQPRRVAAMSVAARVAKEMDVRLGQEVGYSIRFENATSEKTVIKYLTDGMLLREFLTEPDLASYSVIIIDEAHERTLHTDILFGLVKDIARFRPDLKVLISSATIDAEKFSAYFDEAPVFYVPGRRYPVDIYYTPQPEANYIQAAITTILQIHTTQPAGDILVFLTGQDEIELMSENMQELCRILGKRIPEIILCPIYANLPSELQAKIFDPTPPGARKVVLATNIAETSITIDGVNFVIDSGFVKQNMYNPRTGMESLVSVPCSRASADQRAGRAGRVGPGKCFRLYTRRTYNNELDMVTSPEIQRTNLTNIVLLLKSLGINNLLDFDFMDAPPPETLMRSLELLYALGALNNRGELTKLGRQMAEFPTDPMLSKSLIASSKYGCVEEVLSIVSMLGEASSLFYRPKDKIMEADKARANFTQPGGDHLTLLHIWNEWVDTDFSYNWARENFLQYKSLCRARDVRDQLANLCERVEIELVTNSSESLDPIKKAITAGYFSNAARLDRSGDSYRTVKSNQTVYIHPSSSVAEKKPKVIIYFELVLTTKEYCRQITEIQPEWLLEISPHYFKPENIEELQKTQKRHKR</sequence>
<keyword id="KW-0067">ATP-binding</keyword>
<keyword id="KW-0347">Helicase</keyword>
<keyword id="KW-0378">Hydrolase</keyword>
<keyword id="KW-0507">mRNA processing</keyword>
<keyword id="KW-0508">mRNA splicing</keyword>
<keyword id="KW-0547">Nucleotide-binding</keyword>
<keyword id="KW-0539">Nucleus</keyword>
<keyword id="KW-1185">Reference proteome</keyword>
<name>CDC28_SCHPO</name>
<organism>
    <name type="scientific">Schizosaccharomyces pombe (strain 972 / ATCC 24843)</name>
    <name type="common">Fission yeast</name>
    <dbReference type="NCBI Taxonomy" id="284812"/>
    <lineage>
        <taxon>Eukaryota</taxon>
        <taxon>Fungi</taxon>
        <taxon>Dikarya</taxon>
        <taxon>Ascomycota</taxon>
        <taxon>Taphrinomycotina</taxon>
        <taxon>Schizosaccharomycetes</taxon>
        <taxon>Schizosaccharomycetales</taxon>
        <taxon>Schizosaccharomycetaceae</taxon>
        <taxon>Schizosaccharomyces</taxon>
    </lineage>
</organism>
<protein>
    <recommendedName>
        <fullName>Pre-mRNA-splicing factor ATP-dependent RNA helicase-like protein cdc28</fullName>
        <ecNumber>3.6.4.13</ecNumber>
    </recommendedName>
    <alternativeName>
        <fullName>Pre-mRNA-processing protein 8</fullName>
    </alternativeName>
</protein>
<comment type="function">
    <text evidence="1">Involved in pre-mRNA splicing. Is required together with ATP and at least one other factor, for the first cleavage-ligation reaction. Functions as a molecular motor in the activation of the precatalytic spliceosome for the first transesterification reaction of pre-mRNA splicing by hydrolyzing ATP to cause the activation of the spliceosome without the occurrence of splicing (By similarity).</text>
</comment>
<comment type="catalytic activity">
    <reaction>
        <text>ATP + H2O = ADP + phosphate + H(+)</text>
        <dbReference type="Rhea" id="RHEA:13065"/>
        <dbReference type="ChEBI" id="CHEBI:15377"/>
        <dbReference type="ChEBI" id="CHEBI:15378"/>
        <dbReference type="ChEBI" id="CHEBI:30616"/>
        <dbReference type="ChEBI" id="CHEBI:43474"/>
        <dbReference type="ChEBI" id="CHEBI:456216"/>
        <dbReference type="EC" id="3.6.4.13"/>
    </reaction>
</comment>
<comment type="subcellular location">
    <subcellularLocation>
        <location evidence="1">Nucleus</location>
    </subcellularLocation>
</comment>
<comment type="disruption phenotype">
    <text evidence="5 6">Cells show pre-mRNA splicing defects. Cdc28-P8 temperature-sensitive mutant causes cell-cycle arrest in G2 and exhibits a splicing defect that leads to accumulation of unspliced precursors at the restrictive temperature. Temperature-sensitive pre-mRNA splicing mutant Prp8-1 exhibits a cell-cycle phenotype identical to cdc28-p8. Prp8-1 mutant produces elongated cells, accumulates U6 snRNA precursor and has defects in an early step of TFIID pre-mRNA splicing at the nonpermissive temperature.</text>
</comment>
<comment type="similarity">
    <text evidence="7">Belongs to the DEAD box helicase family. DEAH subfamily. DDX16/PRP8 sub-subfamily.</text>
</comment>
<comment type="sequence caution" evidence="7">
    <conflict type="frameshift">
        <sequence resource="EMBL-CDS" id="AAC49377"/>
    </conflict>
</comment>
<gene>
    <name type="primary">cdc28</name>
    <name type="synonym">prp8</name>
    <name type="ORF">SPBC19C2.01</name>
    <name type="ORF">SPBC21B10.01c</name>
    <name type="ORF">SPBC874.01</name>
</gene>
<evidence type="ECO:0000250" key="1"/>
<evidence type="ECO:0000255" key="2">
    <source>
        <dbReference type="PROSITE-ProRule" id="PRU00541"/>
    </source>
</evidence>
<evidence type="ECO:0000255" key="3">
    <source>
        <dbReference type="PROSITE-ProRule" id="PRU00542"/>
    </source>
</evidence>
<evidence type="ECO:0000256" key="4">
    <source>
        <dbReference type="SAM" id="MobiDB-lite"/>
    </source>
</evidence>
<evidence type="ECO:0000269" key="5">
    <source>
    </source>
</evidence>
<evidence type="ECO:0000269" key="6">
    <source>
    </source>
</evidence>
<evidence type="ECO:0000305" key="7"/>
<dbReference type="EC" id="3.6.4.13"/>
<dbReference type="EMBL" id="U48733">
    <property type="protein sequence ID" value="AAC49377.1"/>
    <property type="status" value="ALT_FRAME"/>
    <property type="molecule type" value="Genomic_DNA"/>
</dbReference>
<dbReference type="EMBL" id="CU329671">
    <property type="protein sequence ID" value="CAB57929.2"/>
    <property type="molecule type" value="Genomic_DNA"/>
</dbReference>
<dbReference type="PIR" id="T46568">
    <property type="entry name" value="T46568"/>
</dbReference>
<dbReference type="PIR" id="T50372">
    <property type="entry name" value="T50372"/>
</dbReference>
<dbReference type="RefSeq" id="NP_595686.2">
    <property type="nucleotide sequence ID" value="NM_001021581.3"/>
</dbReference>
<dbReference type="SMR" id="Q10752"/>
<dbReference type="BioGRID" id="277230">
    <property type="interactions" value="15"/>
</dbReference>
<dbReference type="FunCoup" id="Q10752">
    <property type="interactions" value="561"/>
</dbReference>
<dbReference type="STRING" id="284812.Q10752"/>
<dbReference type="iPTMnet" id="Q10752"/>
<dbReference type="PaxDb" id="4896-SPBC19C2.01.1"/>
<dbReference type="EnsemblFungi" id="SPBC19C2.01.1">
    <property type="protein sequence ID" value="SPBC19C2.01.1:pep"/>
    <property type="gene ID" value="SPBC19C2.01"/>
</dbReference>
<dbReference type="GeneID" id="2540707"/>
<dbReference type="KEGG" id="spo:2540707"/>
<dbReference type="PomBase" id="SPBC19C2.01">
    <property type="gene designation" value="cdc28"/>
</dbReference>
<dbReference type="VEuPathDB" id="FungiDB:SPBC19C2.01"/>
<dbReference type="eggNOG" id="KOG0923">
    <property type="taxonomic scope" value="Eukaryota"/>
</dbReference>
<dbReference type="eggNOG" id="KOG0925">
    <property type="taxonomic scope" value="Eukaryota"/>
</dbReference>
<dbReference type="HOGENOM" id="CLU_001832_7_0_1"/>
<dbReference type="InParanoid" id="Q10752"/>
<dbReference type="OMA" id="PLDPMMS"/>
<dbReference type="PhylomeDB" id="Q10752"/>
<dbReference type="PRO" id="PR:Q10752"/>
<dbReference type="Proteomes" id="UP000002485">
    <property type="component" value="Chromosome II"/>
</dbReference>
<dbReference type="GO" id="GO:0005681">
    <property type="term" value="C:spliceosomal complex"/>
    <property type="evidence" value="ECO:0000314"/>
    <property type="project" value="PomBase"/>
</dbReference>
<dbReference type="GO" id="GO:0071006">
    <property type="term" value="C:U2-type catalytic step 1 spliceosome"/>
    <property type="evidence" value="ECO:0000305"/>
    <property type="project" value="PomBase"/>
</dbReference>
<dbReference type="GO" id="GO:0005524">
    <property type="term" value="F:ATP binding"/>
    <property type="evidence" value="ECO:0007669"/>
    <property type="project" value="UniProtKB-KW"/>
</dbReference>
<dbReference type="GO" id="GO:0016887">
    <property type="term" value="F:ATP hydrolysis activity"/>
    <property type="evidence" value="ECO:0007669"/>
    <property type="project" value="RHEA"/>
</dbReference>
<dbReference type="GO" id="GO:0004386">
    <property type="term" value="F:helicase activity"/>
    <property type="evidence" value="ECO:0000318"/>
    <property type="project" value="GO_Central"/>
</dbReference>
<dbReference type="GO" id="GO:0003723">
    <property type="term" value="F:RNA binding"/>
    <property type="evidence" value="ECO:0000318"/>
    <property type="project" value="GO_Central"/>
</dbReference>
<dbReference type="GO" id="GO:0003724">
    <property type="term" value="F:RNA helicase activity"/>
    <property type="evidence" value="ECO:0000304"/>
    <property type="project" value="PomBase"/>
</dbReference>
<dbReference type="GO" id="GO:0000349">
    <property type="term" value="P:generation of catalytic spliceosome for first transesterification step"/>
    <property type="evidence" value="ECO:0000266"/>
    <property type="project" value="PomBase"/>
</dbReference>
<dbReference type="CDD" id="cd17974">
    <property type="entry name" value="DEXHc_DHX16"/>
    <property type="match status" value="1"/>
</dbReference>
<dbReference type="CDD" id="cd18791">
    <property type="entry name" value="SF2_C_RHA"/>
    <property type="match status" value="1"/>
</dbReference>
<dbReference type="FunFam" id="1.20.120.1080:FF:000001">
    <property type="entry name" value="Pre-mRNA-splicing factor ATP-dependent RNA helicase"/>
    <property type="match status" value="1"/>
</dbReference>
<dbReference type="FunFam" id="3.40.50.300:FF:000007">
    <property type="entry name" value="Pre-mRNA-splicing factor ATP-dependent RNA helicase"/>
    <property type="match status" value="1"/>
</dbReference>
<dbReference type="FunFam" id="3.40.50.300:FF:000726">
    <property type="entry name" value="Pre-mRNA-splicing factor ATP-dependent RNA helicase"/>
    <property type="match status" value="1"/>
</dbReference>
<dbReference type="Gene3D" id="1.20.120.1080">
    <property type="match status" value="1"/>
</dbReference>
<dbReference type="Gene3D" id="3.40.50.300">
    <property type="entry name" value="P-loop containing nucleotide triphosphate hydrolases"/>
    <property type="match status" value="2"/>
</dbReference>
<dbReference type="InterPro" id="IPR011709">
    <property type="entry name" value="DEAD-box_helicase_OB_fold"/>
</dbReference>
<dbReference type="InterPro" id="IPR011545">
    <property type="entry name" value="DEAD/DEAH_box_helicase_dom"/>
</dbReference>
<dbReference type="InterPro" id="IPR002464">
    <property type="entry name" value="DNA/RNA_helicase_DEAH_CS"/>
</dbReference>
<dbReference type="InterPro" id="IPR048333">
    <property type="entry name" value="HA2_WH"/>
</dbReference>
<dbReference type="InterPro" id="IPR007502">
    <property type="entry name" value="Helicase-assoc_dom"/>
</dbReference>
<dbReference type="InterPro" id="IPR014001">
    <property type="entry name" value="Helicase_ATP-bd"/>
</dbReference>
<dbReference type="InterPro" id="IPR001650">
    <property type="entry name" value="Helicase_C-like"/>
</dbReference>
<dbReference type="InterPro" id="IPR027417">
    <property type="entry name" value="P-loop_NTPase"/>
</dbReference>
<dbReference type="PANTHER" id="PTHR18934">
    <property type="entry name" value="ATP-DEPENDENT RNA HELICASE"/>
    <property type="match status" value="1"/>
</dbReference>
<dbReference type="PANTHER" id="PTHR18934:SF83">
    <property type="entry name" value="PRE-MRNA-SPLICING FACTOR ATP-DEPENDENT RNA HELICASE DHX16"/>
    <property type="match status" value="1"/>
</dbReference>
<dbReference type="Pfam" id="PF00270">
    <property type="entry name" value="DEAD"/>
    <property type="match status" value="1"/>
</dbReference>
<dbReference type="Pfam" id="PF21010">
    <property type="entry name" value="HA2_C"/>
    <property type="match status" value="1"/>
</dbReference>
<dbReference type="Pfam" id="PF04408">
    <property type="entry name" value="HA2_N"/>
    <property type="match status" value="1"/>
</dbReference>
<dbReference type="Pfam" id="PF00271">
    <property type="entry name" value="Helicase_C"/>
    <property type="match status" value="1"/>
</dbReference>
<dbReference type="Pfam" id="PF07717">
    <property type="entry name" value="OB_NTP_bind"/>
    <property type="match status" value="1"/>
</dbReference>
<dbReference type="SMART" id="SM00487">
    <property type="entry name" value="DEXDc"/>
    <property type="match status" value="1"/>
</dbReference>
<dbReference type="SMART" id="SM00847">
    <property type="entry name" value="HA2"/>
    <property type="match status" value="1"/>
</dbReference>
<dbReference type="SMART" id="SM00490">
    <property type="entry name" value="HELICc"/>
    <property type="match status" value="1"/>
</dbReference>
<dbReference type="SUPFAM" id="SSF52540">
    <property type="entry name" value="P-loop containing nucleoside triphosphate hydrolases"/>
    <property type="match status" value="1"/>
</dbReference>
<dbReference type="PROSITE" id="PS00690">
    <property type="entry name" value="DEAH_ATP_HELICASE"/>
    <property type="match status" value="1"/>
</dbReference>
<dbReference type="PROSITE" id="PS51192">
    <property type="entry name" value="HELICASE_ATP_BIND_1"/>
    <property type="match status" value="1"/>
</dbReference>
<dbReference type="PROSITE" id="PS51194">
    <property type="entry name" value="HELICASE_CTER"/>
    <property type="match status" value="1"/>
</dbReference>
<reference key="1">
    <citation type="journal article" date="1996" name="Mol. Biol. Cell">
        <title>A connection between pre-mRNA splicing and the cell cycle in fission yeast: cdc28+ is allelic with prp8+ and encodes an RNA-dependent ATPase/helicase.</title>
        <authorList>
            <person name="Lundgren K."/>
            <person name="Allan S."/>
            <person name="Urushiyama S."/>
            <person name="Tani T."/>
            <person name="Ohshima Y."/>
            <person name="Frendewey D."/>
            <person name="Beach D."/>
        </authorList>
    </citation>
    <scope>NUCLEOTIDE SEQUENCE [GENOMIC DNA]</scope>
    <scope>DISRUPTION PHENOTYPE</scope>
</reference>
<reference key="2">
    <citation type="journal article" date="2002" name="Nature">
        <title>The genome sequence of Schizosaccharomyces pombe.</title>
        <authorList>
            <person name="Wood V."/>
            <person name="Gwilliam R."/>
            <person name="Rajandream M.A."/>
            <person name="Lyne M.H."/>
            <person name="Lyne R."/>
            <person name="Stewart A."/>
            <person name="Sgouros J.G."/>
            <person name="Peat N."/>
            <person name="Hayles J."/>
            <person name="Baker S.G."/>
            <person name="Basham D."/>
            <person name="Bowman S."/>
            <person name="Brooks K."/>
            <person name="Brown D."/>
            <person name="Brown S."/>
            <person name="Chillingworth T."/>
            <person name="Churcher C.M."/>
            <person name="Collins M."/>
            <person name="Connor R."/>
            <person name="Cronin A."/>
            <person name="Davis P."/>
            <person name="Feltwell T."/>
            <person name="Fraser A."/>
            <person name="Gentles S."/>
            <person name="Goble A."/>
            <person name="Hamlin N."/>
            <person name="Harris D.E."/>
            <person name="Hidalgo J."/>
            <person name="Hodgson G."/>
            <person name="Holroyd S."/>
            <person name="Hornsby T."/>
            <person name="Howarth S."/>
            <person name="Huckle E.J."/>
            <person name="Hunt S."/>
            <person name="Jagels K."/>
            <person name="James K.D."/>
            <person name="Jones L."/>
            <person name="Jones M."/>
            <person name="Leather S."/>
            <person name="McDonald S."/>
            <person name="McLean J."/>
            <person name="Mooney P."/>
            <person name="Moule S."/>
            <person name="Mungall K.L."/>
            <person name="Murphy L.D."/>
            <person name="Niblett D."/>
            <person name="Odell C."/>
            <person name="Oliver K."/>
            <person name="O'Neil S."/>
            <person name="Pearson D."/>
            <person name="Quail M.A."/>
            <person name="Rabbinowitsch E."/>
            <person name="Rutherford K.M."/>
            <person name="Rutter S."/>
            <person name="Saunders D."/>
            <person name="Seeger K."/>
            <person name="Sharp S."/>
            <person name="Skelton J."/>
            <person name="Simmonds M.N."/>
            <person name="Squares R."/>
            <person name="Squares S."/>
            <person name="Stevens K."/>
            <person name="Taylor K."/>
            <person name="Taylor R.G."/>
            <person name="Tivey A."/>
            <person name="Walsh S.V."/>
            <person name="Warren T."/>
            <person name="Whitehead S."/>
            <person name="Woodward J.R."/>
            <person name="Volckaert G."/>
            <person name="Aert R."/>
            <person name="Robben J."/>
            <person name="Grymonprez B."/>
            <person name="Weltjens I."/>
            <person name="Vanstreels E."/>
            <person name="Rieger M."/>
            <person name="Schaefer M."/>
            <person name="Mueller-Auer S."/>
            <person name="Gabel C."/>
            <person name="Fuchs M."/>
            <person name="Duesterhoeft A."/>
            <person name="Fritzc C."/>
            <person name="Holzer E."/>
            <person name="Moestl D."/>
            <person name="Hilbert H."/>
            <person name="Borzym K."/>
            <person name="Langer I."/>
            <person name="Beck A."/>
            <person name="Lehrach H."/>
            <person name="Reinhardt R."/>
            <person name="Pohl T.M."/>
            <person name="Eger P."/>
            <person name="Zimmermann W."/>
            <person name="Wedler H."/>
            <person name="Wambutt R."/>
            <person name="Purnelle B."/>
            <person name="Goffeau A."/>
            <person name="Cadieu E."/>
            <person name="Dreano S."/>
            <person name="Gloux S."/>
            <person name="Lelaure V."/>
            <person name="Mottier S."/>
            <person name="Galibert F."/>
            <person name="Aves S.J."/>
            <person name="Xiang Z."/>
            <person name="Hunt C."/>
            <person name="Moore K."/>
            <person name="Hurst S.M."/>
            <person name="Lucas M."/>
            <person name="Rochet M."/>
            <person name="Gaillardin C."/>
            <person name="Tallada V.A."/>
            <person name="Garzon A."/>
            <person name="Thode G."/>
            <person name="Daga R.R."/>
            <person name="Cruzado L."/>
            <person name="Jimenez J."/>
            <person name="Sanchez M."/>
            <person name="del Rey F."/>
            <person name="Benito J."/>
            <person name="Dominguez A."/>
            <person name="Revuelta J.L."/>
            <person name="Moreno S."/>
            <person name="Armstrong J."/>
            <person name="Forsburg S.L."/>
            <person name="Cerutti L."/>
            <person name="Lowe T."/>
            <person name="McCombie W.R."/>
            <person name="Paulsen I."/>
            <person name="Potashkin J."/>
            <person name="Shpakovski G.V."/>
            <person name="Ussery D."/>
            <person name="Barrell B.G."/>
            <person name="Nurse P."/>
        </authorList>
    </citation>
    <scope>NUCLEOTIDE SEQUENCE [LARGE SCALE GENOMIC DNA]</scope>
    <source>
        <strain>972 / ATCC 24843</strain>
    </source>
</reference>
<reference key="3">
    <citation type="journal article" date="1996" name="Mol. Gen. Genet.">
        <title>Isolation of novel pre-mRNA splicing mutants of Schizosaccharomyces pombe.</title>
        <authorList>
            <person name="Urushiyama S."/>
            <person name="Tani T."/>
            <person name="Ohshima Y."/>
        </authorList>
    </citation>
    <scope>DISRUPTION PHENOTYPE</scope>
</reference>
<accession>Q10752</accession>
<accession>Q9URU1</accession>
<accession>Q9USV9</accession>
<accession>Q9UUD7</accession>